<organism>
    <name type="scientific">Pleurotus ostreatus (strain PC15)</name>
    <name type="common">Oyster mushroom</name>
    <dbReference type="NCBI Taxonomy" id="1137138"/>
    <lineage>
        <taxon>Eukaryota</taxon>
        <taxon>Fungi</taxon>
        <taxon>Dikarya</taxon>
        <taxon>Basidiomycota</taxon>
        <taxon>Agaricomycotina</taxon>
        <taxon>Agaricomycetes</taxon>
        <taxon>Agaricomycetidae</taxon>
        <taxon>Agaricales</taxon>
        <taxon>Pleurotineae</taxon>
        <taxon>Pleurotaceae</taxon>
        <taxon>Pleurotus</taxon>
    </lineage>
</organism>
<proteinExistence type="inferred from homology"/>
<keyword id="KW-0134">Cell wall</keyword>
<keyword id="KW-1015">Disulfide bond</keyword>
<keyword id="KW-1185">Reference proteome</keyword>
<keyword id="KW-0964">Secreted</keyword>
<keyword id="KW-0732">Signal</keyword>
<reference key="1">
    <citation type="journal article" date="2014" name="Proc. Natl. Acad. Sci. U.S.A.">
        <title>Extensive sampling of basidiomycete genomes demonstrates inadequacy of the white-rot/brown-rot paradigm for wood decay fungi.</title>
        <authorList>
            <person name="Riley R."/>
            <person name="Salamov A.A."/>
            <person name="Brown D.W."/>
            <person name="Nagy L.G."/>
            <person name="Floudas D."/>
            <person name="Held B.W."/>
            <person name="Levasseur A."/>
            <person name="Lombard V."/>
            <person name="Morin E."/>
            <person name="Otillar R."/>
            <person name="Lindquist E.A."/>
            <person name="Sun H."/>
            <person name="LaButti K.M."/>
            <person name="Schmutz J."/>
            <person name="Jabbour D."/>
            <person name="Luo H."/>
            <person name="Baker S.E."/>
            <person name="Pisabarro A.G."/>
            <person name="Walton J.D."/>
            <person name="Blanchette R.A."/>
            <person name="Henrissat B."/>
            <person name="Martin F."/>
            <person name="Cullen D."/>
            <person name="Hibbett D.S."/>
            <person name="Grigoriev I.V."/>
        </authorList>
    </citation>
    <scope>NUCLEOTIDE SEQUENCE [LARGE SCALE GENOMIC DNA]</scope>
    <source>
        <strain>PC15</strain>
    </source>
</reference>
<reference key="2">
    <citation type="journal article" date="2021" name="Microbiol. Res.">
        <title>Identification of hydrophobin genes and their physiological functions related to growth and development in Pleurotus ostreatus.</title>
        <authorList>
            <person name="Xu D."/>
            <person name="Wang Y."/>
            <person name="Keerio A.A."/>
            <person name="Ma A."/>
        </authorList>
    </citation>
    <scope>IDENTIFICATION</scope>
</reference>
<gene>
    <name evidence="3" type="primary">Hydph21</name>
    <name type="ORF">PLEOSDRAFT_160070</name>
</gene>
<dbReference type="EMBL" id="KL198010">
    <property type="protein sequence ID" value="KDQ25427.1"/>
    <property type="molecule type" value="Genomic_DNA"/>
</dbReference>
<dbReference type="VEuPathDB" id="FungiDB:PLEOSDRAFT_160070"/>
<dbReference type="HOGENOM" id="CLU_105134_2_0_1"/>
<dbReference type="InParanoid" id="A0A067NMT6"/>
<dbReference type="OrthoDB" id="269689at5338"/>
<dbReference type="Proteomes" id="UP000027073">
    <property type="component" value="Unassembled WGS sequence"/>
</dbReference>
<dbReference type="GO" id="GO:0005576">
    <property type="term" value="C:extracellular region"/>
    <property type="evidence" value="ECO:0007669"/>
    <property type="project" value="UniProtKB-KW"/>
</dbReference>
<dbReference type="GO" id="GO:0009277">
    <property type="term" value="C:fungal-type cell wall"/>
    <property type="evidence" value="ECO:0007669"/>
    <property type="project" value="InterPro"/>
</dbReference>
<dbReference type="GO" id="GO:0005199">
    <property type="term" value="F:structural constituent of cell wall"/>
    <property type="evidence" value="ECO:0007669"/>
    <property type="project" value="InterPro"/>
</dbReference>
<dbReference type="CDD" id="cd23507">
    <property type="entry name" value="hydrophobin_I"/>
    <property type="match status" value="1"/>
</dbReference>
<dbReference type="InterPro" id="IPR001338">
    <property type="entry name" value="Hydrophobin"/>
</dbReference>
<dbReference type="Pfam" id="PF01185">
    <property type="entry name" value="Hydrophobin"/>
    <property type="match status" value="1"/>
</dbReference>
<dbReference type="SMART" id="SM00075">
    <property type="entry name" value="HYDRO"/>
    <property type="match status" value="1"/>
</dbReference>
<feature type="signal peptide" evidence="2">
    <location>
        <begin position="1"/>
        <end position="20"/>
    </location>
</feature>
<feature type="chain" id="PRO_5013988014" description="Class I hydrophobin 21">
    <location>
        <begin position="21"/>
        <end position="115"/>
    </location>
</feature>
<feature type="disulfide bond" evidence="1">
    <location>
        <begin position="30"/>
        <end position="93"/>
    </location>
</feature>
<feature type="disulfide bond" evidence="1">
    <location>
        <begin position="37"/>
        <end position="87"/>
    </location>
</feature>
<feature type="disulfide bond" evidence="1">
    <location>
        <begin position="38"/>
        <end position="77"/>
    </location>
</feature>
<feature type="disulfide bond" evidence="1">
    <location>
        <begin position="94"/>
        <end position="107"/>
    </location>
</feature>
<comment type="function">
    <text evidence="4">Aerial growth, conidiation, and dispersal of filamentous fungi in the environment rely upon a capability of their secreting small amphipathic proteins called hydrophobins (HPBs) with low sequence identity. Class I can self-assemble into an outermost layer of rodlet bundles on aerial cell surfaces, conferring cellular hydrophobicity that supports fungal growth, development and dispersal; whereas Class II form highly ordered films at water-air interfaces through intermolecular interactions but contribute nothing to the rodlet structure.</text>
</comment>
<comment type="subunit">
    <text evidence="1">Self-assembles to form functional amyloid fibrils called rodlets. Self-assembly into fibrillar rodlets occurs spontaneously at hydrophobic:hydrophilic interfaces and the rodlets further associate laterally to form amphipathic monolayers.</text>
</comment>
<comment type="subcellular location">
    <subcellularLocation>
        <location evidence="5">Secreted</location>
    </subcellularLocation>
    <subcellularLocation>
        <location evidence="5">Secreted</location>
        <location evidence="5">Cell wall</location>
    </subcellularLocation>
</comment>
<comment type="similarity">
    <text evidence="4">Belongs to the fungal hydrophobin family.</text>
</comment>
<evidence type="ECO:0000250" key="1">
    <source>
        <dbReference type="UniProtKB" id="Q04571"/>
    </source>
</evidence>
<evidence type="ECO:0000255" key="2"/>
<evidence type="ECO:0000303" key="3">
    <source>
    </source>
</evidence>
<evidence type="ECO:0000305" key="4"/>
<evidence type="ECO:0000305" key="5">
    <source>
    </source>
</evidence>
<accession>A0A067NMT6</accession>
<protein>
    <recommendedName>
        <fullName evidence="3">Class I hydrophobin 21</fullName>
    </recommendedName>
</protein>
<name>HYD21_PLEO1</name>
<sequence>MFAAPATMLVLAALAALSSAIPAAQTASKCSTGPVQCCDSVEHHTQPHVNNLLLGLEHFGLVKGLVGGLTGNVGIKCNPILLSSNDCTAQSVCCEHVHFKGNIAVGCTPANIDIL</sequence>